<reference key="1">
    <citation type="journal article" date="1990" name="Nucleic Acids Res.">
        <title>Isolation and characterization of a Drosophila hydei histone DNA repeat unit.</title>
        <authorList>
            <person name="Kremer H."/>
            <person name="Hennig W."/>
        </authorList>
    </citation>
    <scope>NUCLEOTIDE SEQUENCE [GENOMIC DNA]</scope>
</reference>
<reference key="2">
    <citation type="submission" date="1990-04" db="EMBL/GenBank/DDBJ databases">
        <authorList>
            <person name="Strausbaugh L.D."/>
            <person name="Fitch D.H.A."/>
            <person name="Barrett V."/>
        </authorList>
    </citation>
    <scope>NUCLEOTIDE SEQUENCE [GENOMIC DNA]</scope>
</reference>
<gene>
    <name type="primary">His2A</name>
    <name type="synonym">H2a</name>
</gene>
<feature type="initiator methionine" description="Removed" evidence="1">
    <location>
        <position position="1"/>
    </location>
</feature>
<feature type="chain" id="PRO_0000055221" description="Histone H2A">
    <location>
        <begin position="2"/>
        <end position="124"/>
    </location>
</feature>
<feature type="region of interest" description="Disordered" evidence="3">
    <location>
        <begin position="1"/>
        <end position="21"/>
    </location>
</feature>
<feature type="compositionally biased region" description="Basic residues" evidence="3">
    <location>
        <begin position="1"/>
        <end position="18"/>
    </location>
</feature>
<feature type="modified residue" description="N-acetylserine" evidence="1">
    <location>
        <position position="2"/>
    </location>
</feature>
<feature type="modified residue" description="Phosphoserine" evidence="1">
    <location>
        <position position="2"/>
    </location>
</feature>
<feature type="modified residue" description="N6-succinyllysine" evidence="2">
    <location>
        <position position="36"/>
    </location>
</feature>
<feature type="modified residue" description="N5-methylglutamine" evidence="1">
    <location>
        <position position="104"/>
    </location>
</feature>
<feature type="modified residue" description="Phosphothreonine" evidence="1">
    <location>
        <position position="120"/>
    </location>
</feature>
<feature type="cross-link" description="Glycyl lysine isopeptide (Lys-Gly) (interchain with G-Cter in ubiquitin)" evidence="1">
    <location>
        <position position="119"/>
    </location>
</feature>
<sequence length="124" mass="13363">MSGRGKGGKVKGKAKSRSNRAGLQFPVGRIHRLLRKGNYAERVGAGAPVYLAAVMEYLAAEVLELAGNAARDNKKTRIIPRHLQLAIRNDEELNKLLSGVTIAQGGVLPNIQAVLLPKKTEKKA</sequence>
<dbReference type="EMBL" id="X17072">
    <property type="protein sequence ID" value="CAA34921.1"/>
    <property type="molecule type" value="Genomic_DNA"/>
</dbReference>
<dbReference type="EMBL" id="X52576">
    <property type="protein sequence ID" value="CAA36807.1"/>
    <property type="molecule type" value="Genomic_DNA"/>
</dbReference>
<dbReference type="PIR" id="S21938">
    <property type="entry name" value="S21938"/>
</dbReference>
<dbReference type="SMR" id="P84053"/>
<dbReference type="EnsemblMetazoa" id="XM_030223117.1">
    <property type="protein sequence ID" value="XP_030078977.1"/>
    <property type="gene ID" value="LOC115482867"/>
</dbReference>
<dbReference type="EnsemblMetazoa" id="XM_030223118.1">
    <property type="protein sequence ID" value="XP_030078978.1"/>
    <property type="gene ID" value="LOC115482868"/>
</dbReference>
<dbReference type="EnsemblMetazoa" id="XM_030223119.1">
    <property type="protein sequence ID" value="XP_030078979.1"/>
    <property type="gene ID" value="LOC115482869"/>
</dbReference>
<dbReference type="EnsemblMetazoa" id="XM_030223120.1">
    <property type="protein sequence ID" value="XP_030078980.1"/>
    <property type="gene ID" value="LOC115482870"/>
</dbReference>
<dbReference type="EnsemblMetazoa" id="XM_030223121.1">
    <property type="protein sequence ID" value="XP_030078981.1"/>
    <property type="gene ID" value="LOC115482871"/>
</dbReference>
<dbReference type="EnsemblMetazoa" id="XM_030223122.1">
    <property type="protein sequence ID" value="XP_030078982.1"/>
    <property type="gene ID" value="LOC115482872"/>
</dbReference>
<dbReference type="EnsemblMetazoa" id="XM_030223123.1">
    <property type="protein sequence ID" value="XP_030078983.1"/>
    <property type="gene ID" value="LOC115482873"/>
</dbReference>
<dbReference type="EnsemblMetazoa" id="XM_030223137.1">
    <property type="protein sequence ID" value="XP_030078997.1"/>
    <property type="gene ID" value="LOC115482888"/>
</dbReference>
<dbReference type="EnsemblMetazoa" id="XM_030223138.1">
    <property type="protein sequence ID" value="XP_030078998.1"/>
    <property type="gene ID" value="LOC115482889"/>
</dbReference>
<dbReference type="EnsemblMetazoa" id="XM_030223149.1">
    <property type="protein sequence ID" value="XP_030079009.1"/>
    <property type="gene ID" value="LOC115482902"/>
</dbReference>
<dbReference type="EnsemblMetazoa" id="XM_030224485.1">
    <property type="protein sequence ID" value="XP_030080345.1"/>
    <property type="gene ID" value="LOC115483213"/>
</dbReference>
<dbReference type="EnsemblMetazoa" id="XM_030224567.1">
    <property type="protein sequence ID" value="XP_030080427.1"/>
    <property type="gene ID" value="LOC115483224"/>
</dbReference>
<dbReference type="EnsemblMetazoa" id="XM_030224578.1">
    <property type="protein sequence ID" value="XP_030080438.1"/>
    <property type="gene ID" value="LOC115483233"/>
</dbReference>
<dbReference type="EnsemblMetazoa" id="XM_030224594.1">
    <property type="protein sequence ID" value="XP_030080454.1"/>
    <property type="gene ID" value="LOC115483249"/>
</dbReference>
<dbReference type="EnsemblMetazoa" id="XM_030224595.1">
    <property type="protein sequence ID" value="XP_030080455.1"/>
    <property type="gene ID" value="LOC115483250"/>
</dbReference>
<dbReference type="EnsemblMetazoa" id="XM_030224596.1">
    <property type="protein sequence ID" value="XP_030080456.1"/>
    <property type="gene ID" value="LOC115483251"/>
</dbReference>
<dbReference type="EnsemblMetazoa" id="XM_030224597.1">
    <property type="protein sequence ID" value="XP_030080457.1"/>
    <property type="gene ID" value="LOC115483252"/>
</dbReference>
<dbReference type="EnsemblMetazoa" id="XM_030224598.1">
    <property type="protein sequence ID" value="XP_030080458.1"/>
    <property type="gene ID" value="LOC115483253"/>
</dbReference>
<dbReference type="EnsemblMetazoa" id="XM_030224599.1">
    <property type="protein sequence ID" value="XP_030080459.1"/>
    <property type="gene ID" value="LOC115483254"/>
</dbReference>
<dbReference type="EnsemblMetazoa" id="XM_030224611.1">
    <property type="protein sequence ID" value="XP_030080471.1"/>
    <property type="gene ID" value="LOC115483266"/>
</dbReference>
<dbReference type="EnsemblMetazoa" id="XM_030224614.1">
    <property type="protein sequence ID" value="XP_030080474.1"/>
    <property type="gene ID" value="LOC115483269"/>
</dbReference>
<dbReference type="EnsemblMetazoa" id="XM_030224617.1">
    <property type="protein sequence ID" value="XP_030080477.1"/>
    <property type="gene ID" value="LOC115483274"/>
</dbReference>
<dbReference type="EnsemblMetazoa" id="XM_030224622.1">
    <property type="protein sequence ID" value="XP_030080482.1"/>
    <property type="gene ID" value="LOC115483279"/>
</dbReference>
<dbReference type="EnsemblMetazoa" id="XM_030224623.1">
    <property type="protein sequence ID" value="XP_030080483.1"/>
    <property type="gene ID" value="LOC115483280"/>
</dbReference>
<dbReference type="EnsemblMetazoa" id="XM_030224624.1">
    <property type="protein sequence ID" value="XP_030080484.1"/>
    <property type="gene ID" value="LOC115483281"/>
</dbReference>
<dbReference type="EnsemblMetazoa" id="XM_030224625.1">
    <property type="protein sequence ID" value="XP_030080485.1"/>
    <property type="gene ID" value="LOC115483282"/>
</dbReference>
<dbReference type="EnsemblMetazoa" id="XM_030224650.1">
    <property type="protein sequence ID" value="XP_030080510.1"/>
    <property type="gene ID" value="LOC115483297"/>
</dbReference>
<dbReference type="EnsemblMetazoa" id="XM_030224651.1">
    <property type="protein sequence ID" value="XP_030080511.1"/>
    <property type="gene ID" value="LOC115483298"/>
</dbReference>
<dbReference type="EnsemblMetazoa" id="XM_030224687.1">
    <property type="protein sequence ID" value="XP_030080547.1"/>
    <property type="gene ID" value="LOC115483310"/>
</dbReference>
<dbReference type="OMA" id="KANSGRD"/>
<dbReference type="OrthoDB" id="7839361at2759"/>
<dbReference type="Proteomes" id="UP000504633">
    <property type="component" value="Unplaced"/>
</dbReference>
<dbReference type="GO" id="GO:0000786">
    <property type="term" value="C:nucleosome"/>
    <property type="evidence" value="ECO:0000303"/>
    <property type="project" value="UniProtKB"/>
</dbReference>
<dbReference type="GO" id="GO:0005634">
    <property type="term" value="C:nucleus"/>
    <property type="evidence" value="ECO:0007669"/>
    <property type="project" value="UniProtKB-SubCell"/>
</dbReference>
<dbReference type="GO" id="GO:0003677">
    <property type="term" value="F:DNA binding"/>
    <property type="evidence" value="ECO:0000303"/>
    <property type="project" value="UniProtKB"/>
</dbReference>
<dbReference type="GO" id="GO:0046982">
    <property type="term" value="F:protein heterodimerization activity"/>
    <property type="evidence" value="ECO:0007669"/>
    <property type="project" value="InterPro"/>
</dbReference>
<dbReference type="GO" id="GO:0030527">
    <property type="term" value="F:structural constituent of chromatin"/>
    <property type="evidence" value="ECO:0007669"/>
    <property type="project" value="InterPro"/>
</dbReference>
<dbReference type="GO" id="GO:0006334">
    <property type="term" value="P:nucleosome assembly"/>
    <property type="evidence" value="ECO:0000303"/>
    <property type="project" value="UniProtKB"/>
</dbReference>
<dbReference type="CDD" id="cd00074">
    <property type="entry name" value="HFD_H2A"/>
    <property type="match status" value="1"/>
</dbReference>
<dbReference type="FunFam" id="1.10.20.10:FF:000173">
    <property type="entry name" value="Histone H2A"/>
    <property type="match status" value="1"/>
</dbReference>
<dbReference type="Gene3D" id="1.10.20.10">
    <property type="entry name" value="Histone, subunit A"/>
    <property type="match status" value="1"/>
</dbReference>
<dbReference type="InterPro" id="IPR009072">
    <property type="entry name" value="Histone-fold"/>
</dbReference>
<dbReference type="InterPro" id="IPR002119">
    <property type="entry name" value="Histone_H2A"/>
</dbReference>
<dbReference type="InterPro" id="IPR007125">
    <property type="entry name" value="Histone_H2A/H2B/H3"/>
</dbReference>
<dbReference type="InterPro" id="IPR032454">
    <property type="entry name" value="Histone_H2A_C"/>
</dbReference>
<dbReference type="InterPro" id="IPR032458">
    <property type="entry name" value="Histone_H2A_CS"/>
</dbReference>
<dbReference type="PANTHER" id="PTHR23430">
    <property type="entry name" value="HISTONE H2A"/>
    <property type="match status" value="1"/>
</dbReference>
<dbReference type="Pfam" id="PF00125">
    <property type="entry name" value="Histone"/>
    <property type="match status" value="1"/>
</dbReference>
<dbReference type="Pfam" id="PF16211">
    <property type="entry name" value="Histone_H2A_C"/>
    <property type="match status" value="1"/>
</dbReference>
<dbReference type="PRINTS" id="PR00620">
    <property type="entry name" value="HISTONEH2A"/>
</dbReference>
<dbReference type="SMART" id="SM00414">
    <property type="entry name" value="H2A"/>
    <property type="match status" value="1"/>
</dbReference>
<dbReference type="SUPFAM" id="SSF47113">
    <property type="entry name" value="Histone-fold"/>
    <property type="match status" value="1"/>
</dbReference>
<dbReference type="PROSITE" id="PS00046">
    <property type="entry name" value="HISTONE_H2A"/>
    <property type="match status" value="1"/>
</dbReference>
<name>H2A_DROHY</name>
<comment type="function">
    <text>Core component of nucleosome. Nucleosomes wrap and compact DNA into chromatin, limiting DNA accessibility to the cellular machineries which require DNA as a template. Histones thereby play a central role in transcription regulation, DNA repair, DNA replication and chromosomal stability. DNA accessibility is regulated via a complex set of post-translational modifications of histones, also called histone code, and nucleosome remodeling.</text>
</comment>
<comment type="subunit">
    <text>The nucleosome is a histone octamer containing two molecules each of H2A, H2B, H3 and H4 assembled in one H3-H4 heterotetramer and two H2A-H2B heterodimers. The octamer wraps approximately 147 bp of DNA.</text>
</comment>
<comment type="subcellular location">
    <subcellularLocation>
        <location>Nucleus</location>
    </subcellularLocation>
    <subcellularLocation>
        <location>Chromosome</location>
    </subcellularLocation>
</comment>
<comment type="PTM">
    <text evidence="1">The chromatin-associated form, but not the free cytoplasmic form, is phosphorylated on Thr-120 by NHK-1 during mitosis, and dephosphorylated during S-phase. Also phosphorylated on Thr-120 by NHK-1 during prophase I of meiosis; which is required for acetylation of H3 'Lys-14' and H4 'Lys-5', diassembly of the synaptonemal complex, and karyosome formation (By similarity).</text>
</comment>
<comment type="PTM">
    <text evidence="1">Monoubiquitination of Lys-119 by sce/dRING gives a specific tag for epigenetic transcriptional repression.</text>
</comment>
<comment type="PTM">
    <text evidence="1">Phosphorylation on Ser-2 is enhanced during mitosis. Phosphorylation on Ser-2 directly represses transcription (By similarity).</text>
</comment>
<comment type="similarity">
    <text evidence="4">Belongs to the histone H2A family.</text>
</comment>
<evidence type="ECO:0000250" key="1"/>
<evidence type="ECO:0000250" key="2">
    <source>
        <dbReference type="UniProtKB" id="P84051"/>
    </source>
</evidence>
<evidence type="ECO:0000256" key="3">
    <source>
        <dbReference type="SAM" id="MobiDB-lite"/>
    </source>
</evidence>
<evidence type="ECO:0000305" key="4"/>
<protein>
    <recommendedName>
        <fullName>Histone H2A</fullName>
    </recommendedName>
</protein>
<keyword id="KW-0007">Acetylation</keyword>
<keyword id="KW-0158">Chromosome</keyword>
<keyword id="KW-0238">DNA-binding</keyword>
<keyword id="KW-1017">Isopeptide bond</keyword>
<keyword id="KW-0488">Methylation</keyword>
<keyword id="KW-0544">Nucleosome core</keyword>
<keyword id="KW-0539">Nucleus</keyword>
<keyword id="KW-0597">Phosphoprotein</keyword>
<keyword id="KW-0832">Ubl conjugation</keyword>
<accession>P84053</accession>
<accession>P02267</accession>
<organism>
    <name type="scientific">Drosophila hydei</name>
    <name type="common">Fruit fly</name>
    <dbReference type="NCBI Taxonomy" id="7224"/>
    <lineage>
        <taxon>Eukaryota</taxon>
        <taxon>Metazoa</taxon>
        <taxon>Ecdysozoa</taxon>
        <taxon>Arthropoda</taxon>
        <taxon>Hexapoda</taxon>
        <taxon>Insecta</taxon>
        <taxon>Pterygota</taxon>
        <taxon>Neoptera</taxon>
        <taxon>Endopterygota</taxon>
        <taxon>Diptera</taxon>
        <taxon>Brachycera</taxon>
        <taxon>Muscomorpha</taxon>
        <taxon>Ephydroidea</taxon>
        <taxon>Drosophilidae</taxon>
        <taxon>Drosophila</taxon>
    </lineage>
</organism>
<proteinExistence type="inferred from homology"/>